<protein>
    <recommendedName>
        <fullName>Keratin, type 1 cytoskeletal 11</fullName>
    </recommendedName>
    <alternativeName>
        <fullName>Type I keratin 11</fullName>
    </alternativeName>
</protein>
<proteinExistence type="evidence at protein level"/>
<sequence>MSYSSFSIAQGSRVPSLSGTRSSSSYSLKSDLIPQSRRSHSVYGTPGSIRISSPSMPSAIVSSYSSTLSSALPSSSYGGNSYSSSTSFSSGGTDFLLGTSGKEAMQNLNDRLADYLARVRSLEDRNRELEQKIREWYEKQGAGTKRKDFSHYFKIIADLQNQINAGNMENARILLKIDNAKLAADDFKQKWEAEQALRLGVEADIHGLRKILDEMTLARTDLEMQIEGHKEEKAYLIKSHDEDMKALRSQLGGQVNVEVDAAPAEDLTKKLEIIRQRYEQLAEKNRKESEDWFIKKSEELNKNMASSTEALQTSKTEINELRRTIQGLEIELQSQQSMKGALEGQLADTEHRYSSTLMNLQNIINQKEAELSNIRADIESQASKYKILLDVKTRLENEISTYRTLLEGDAGRSHSSSHLSSTVSKDKVPVSSPNVITKVRTIVEEKINGQVISKKEYEGSPDQLSYY</sequence>
<evidence type="ECO:0000255" key="1"/>
<evidence type="ECO:0000255" key="2">
    <source>
        <dbReference type="PROSITE-ProRule" id="PRU01188"/>
    </source>
</evidence>
<evidence type="ECO:0000256" key="3">
    <source>
        <dbReference type="SAM" id="MobiDB-lite"/>
    </source>
</evidence>
<evidence type="ECO:0000269" key="4">
    <source>
    </source>
</evidence>
<evidence type="ECO:0000305" key="5"/>
<evidence type="ECO:0000312" key="6">
    <source>
        <dbReference type="EMBL" id="CAH05041.1"/>
    </source>
</evidence>
<comment type="subunit">
    <text evidence="5">Heterotetramer of two type I and two type II keratins.</text>
</comment>
<comment type="tissue specificity">
    <text evidence="4">Expressed in the outermost cell layers of skin epidermis (at protein level).</text>
</comment>
<comment type="miscellaneous">
    <text evidence="5">There are two types of cytoskeletal and microfibrillar keratin, I (acidic) and II (neutral to basic) (40-55 and 56-70 kDa, respectively).</text>
</comment>
<comment type="similarity">
    <text evidence="2">Belongs to the intermediate filament family.</text>
</comment>
<reference evidence="5 6" key="1">
    <citation type="journal article" date="2005" name="Eur. J. Cell Biol.">
        <title>Evolution of tissue-specific keratins as deduced from novel cDNA sequences of the lungfish Protopterus aethiopicus.</title>
        <authorList>
            <person name="Schaffeld M."/>
            <person name="Bremer M."/>
            <person name="Hunzinger C."/>
            <person name="Markl J."/>
        </authorList>
    </citation>
    <scope>NUCLEOTIDE SEQUENCE [MRNA]</scope>
    <scope>TISSUE SPECIFICITY</scope>
    <source>
        <tissue evidence="4">Skin</tissue>
    </source>
</reference>
<gene>
    <name evidence="6" type="primary">krt11</name>
</gene>
<accession>Q5K2P6</accession>
<keyword id="KW-0175">Coiled coil</keyword>
<keyword id="KW-0403">Intermediate filament</keyword>
<keyword id="KW-0416">Keratin</keyword>
<feature type="chain" id="PRO_0000308519" description="Keratin, type 1 cytoskeletal 11">
    <location>
        <begin position="1"/>
        <end position="467"/>
    </location>
</feature>
<feature type="domain" description="IF rod" evidence="2">
    <location>
        <begin position="101"/>
        <end position="413"/>
    </location>
</feature>
<feature type="region of interest" description="Head" evidence="1">
    <location>
        <begin position="1"/>
        <end position="100"/>
    </location>
</feature>
<feature type="region of interest" description="Disordered" evidence="3">
    <location>
        <begin position="12"/>
        <end position="32"/>
    </location>
</feature>
<feature type="region of interest" description="Coil 1A" evidence="1">
    <location>
        <begin position="101"/>
        <end position="137"/>
    </location>
</feature>
<feature type="region of interest" description="Linker 1" evidence="1">
    <location>
        <begin position="138"/>
        <end position="156"/>
    </location>
</feature>
<feature type="region of interest" description="Coil 1B" evidence="1">
    <location>
        <begin position="157"/>
        <end position="248"/>
    </location>
</feature>
<feature type="region of interest" description="Linker 12" evidence="1">
    <location>
        <begin position="249"/>
        <end position="268"/>
    </location>
</feature>
<feature type="region of interest" description="Coil 2" evidence="1">
    <location>
        <begin position="269"/>
        <end position="416"/>
    </location>
</feature>
<feature type="region of interest" description="Disordered" evidence="3">
    <location>
        <begin position="409"/>
        <end position="430"/>
    </location>
</feature>
<feature type="region of interest" description="Tail" evidence="1">
    <location>
        <begin position="417"/>
        <end position="463"/>
    </location>
</feature>
<feature type="compositionally biased region" description="Low complexity" evidence="3">
    <location>
        <begin position="12"/>
        <end position="30"/>
    </location>
</feature>
<dbReference type="EMBL" id="AJ785785">
    <property type="protein sequence ID" value="CAH05041.1"/>
    <property type="molecule type" value="mRNA"/>
</dbReference>
<dbReference type="SMR" id="Q5K2P6"/>
<dbReference type="GO" id="GO:0005737">
    <property type="term" value="C:cytoplasm"/>
    <property type="evidence" value="ECO:0000314"/>
    <property type="project" value="UniProtKB"/>
</dbReference>
<dbReference type="GO" id="GO:0005856">
    <property type="term" value="C:cytoskeleton"/>
    <property type="evidence" value="ECO:0000314"/>
    <property type="project" value="UniProtKB"/>
</dbReference>
<dbReference type="GO" id="GO:0005882">
    <property type="term" value="C:intermediate filament"/>
    <property type="evidence" value="ECO:0007669"/>
    <property type="project" value="UniProtKB-KW"/>
</dbReference>
<dbReference type="GO" id="GO:0005198">
    <property type="term" value="F:structural molecule activity"/>
    <property type="evidence" value="ECO:0007669"/>
    <property type="project" value="InterPro"/>
</dbReference>
<dbReference type="GO" id="GO:0030855">
    <property type="term" value="P:epithelial cell differentiation"/>
    <property type="evidence" value="ECO:0007669"/>
    <property type="project" value="TreeGrafter"/>
</dbReference>
<dbReference type="GO" id="GO:0045109">
    <property type="term" value="P:intermediate filament organization"/>
    <property type="evidence" value="ECO:0007669"/>
    <property type="project" value="TreeGrafter"/>
</dbReference>
<dbReference type="FunFam" id="1.20.5.1160:FF:000002">
    <property type="entry name" value="Type I keratin 10"/>
    <property type="match status" value="1"/>
</dbReference>
<dbReference type="FunFam" id="1.20.5.170:FF:000002">
    <property type="entry name" value="Type I keratin KA11"/>
    <property type="match status" value="1"/>
</dbReference>
<dbReference type="FunFam" id="1.20.5.500:FF:000001">
    <property type="entry name" value="Type II keratin 23"/>
    <property type="match status" value="1"/>
</dbReference>
<dbReference type="Gene3D" id="1.20.5.170">
    <property type="match status" value="1"/>
</dbReference>
<dbReference type="Gene3D" id="1.20.5.500">
    <property type="entry name" value="Single helix bin"/>
    <property type="match status" value="1"/>
</dbReference>
<dbReference type="Gene3D" id="1.20.5.1160">
    <property type="entry name" value="Vasodilator-stimulated phosphoprotein"/>
    <property type="match status" value="1"/>
</dbReference>
<dbReference type="InterPro" id="IPR018039">
    <property type="entry name" value="IF_conserved"/>
</dbReference>
<dbReference type="InterPro" id="IPR039008">
    <property type="entry name" value="IF_rod_dom"/>
</dbReference>
<dbReference type="InterPro" id="IPR002957">
    <property type="entry name" value="Keratin_I"/>
</dbReference>
<dbReference type="PANTHER" id="PTHR23239">
    <property type="entry name" value="INTERMEDIATE FILAMENT"/>
    <property type="match status" value="1"/>
</dbReference>
<dbReference type="PANTHER" id="PTHR23239:SF180">
    <property type="entry name" value="KERATIN, TYPE I CYTOSKELETAL 17"/>
    <property type="match status" value="1"/>
</dbReference>
<dbReference type="Pfam" id="PF00038">
    <property type="entry name" value="Filament"/>
    <property type="match status" value="1"/>
</dbReference>
<dbReference type="PRINTS" id="PR01248">
    <property type="entry name" value="TYPE1KERATIN"/>
</dbReference>
<dbReference type="SMART" id="SM01391">
    <property type="entry name" value="Filament"/>
    <property type="match status" value="1"/>
</dbReference>
<dbReference type="SUPFAM" id="SSF64593">
    <property type="entry name" value="Intermediate filament protein, coiled coil region"/>
    <property type="match status" value="2"/>
</dbReference>
<dbReference type="PROSITE" id="PS00226">
    <property type="entry name" value="IF_ROD_1"/>
    <property type="match status" value="1"/>
</dbReference>
<dbReference type="PROSITE" id="PS51842">
    <property type="entry name" value="IF_ROD_2"/>
    <property type="match status" value="1"/>
</dbReference>
<organism>
    <name type="scientific">Protopterus aethiopicus</name>
    <name type="common">Marbled lungfish</name>
    <dbReference type="NCBI Taxonomy" id="7886"/>
    <lineage>
        <taxon>Eukaryota</taxon>
        <taxon>Metazoa</taxon>
        <taxon>Chordata</taxon>
        <taxon>Craniata</taxon>
        <taxon>Vertebrata</taxon>
        <taxon>Euteleostomi</taxon>
        <taxon>Dipnomorpha</taxon>
        <taxon>Ceratodontiformes</taxon>
        <taxon>Lepidosirenoidei</taxon>
        <taxon>Protopteridae</taxon>
        <taxon>Protopterus</taxon>
    </lineage>
</organism>
<name>K1C11_PROAT</name>